<protein>
    <recommendedName>
        <fullName>Cytochrome c</fullName>
    </recommendedName>
</protein>
<accession>P00075</accession>
<name>CYC_ULVIN</name>
<dbReference type="PIR" id="A00067">
    <property type="entry name" value="CCEI"/>
</dbReference>
<dbReference type="GO" id="GO:0005758">
    <property type="term" value="C:mitochondrial intermembrane space"/>
    <property type="evidence" value="ECO:0007669"/>
    <property type="project" value="UniProtKB-SubCell"/>
</dbReference>
<dbReference type="GO" id="GO:0009055">
    <property type="term" value="F:electron transfer activity"/>
    <property type="evidence" value="ECO:0007669"/>
    <property type="project" value="InterPro"/>
</dbReference>
<dbReference type="GO" id="GO:0020037">
    <property type="term" value="F:heme binding"/>
    <property type="evidence" value="ECO:0007669"/>
    <property type="project" value="InterPro"/>
</dbReference>
<dbReference type="GO" id="GO:0046872">
    <property type="term" value="F:metal ion binding"/>
    <property type="evidence" value="ECO:0007669"/>
    <property type="project" value="UniProtKB-KW"/>
</dbReference>
<dbReference type="FunFam" id="1.10.760.10:FF:000001">
    <property type="entry name" value="Cytochrome c iso-1"/>
    <property type="match status" value="1"/>
</dbReference>
<dbReference type="Gene3D" id="1.10.760.10">
    <property type="entry name" value="Cytochrome c-like domain"/>
    <property type="match status" value="1"/>
</dbReference>
<dbReference type="InterPro" id="IPR009056">
    <property type="entry name" value="Cyt_c-like_dom"/>
</dbReference>
<dbReference type="InterPro" id="IPR036909">
    <property type="entry name" value="Cyt_c-like_dom_sf"/>
</dbReference>
<dbReference type="InterPro" id="IPR002327">
    <property type="entry name" value="Cyt_c_1A/1B"/>
</dbReference>
<dbReference type="PANTHER" id="PTHR11961">
    <property type="entry name" value="CYTOCHROME C"/>
    <property type="match status" value="1"/>
</dbReference>
<dbReference type="Pfam" id="PF00034">
    <property type="entry name" value="Cytochrom_C"/>
    <property type="match status" value="1"/>
</dbReference>
<dbReference type="PRINTS" id="PR00604">
    <property type="entry name" value="CYTCHRMECIAB"/>
</dbReference>
<dbReference type="SUPFAM" id="SSF46626">
    <property type="entry name" value="Cytochrome c"/>
    <property type="match status" value="1"/>
</dbReference>
<dbReference type="PROSITE" id="PS51007">
    <property type="entry name" value="CYTC"/>
    <property type="match status" value="1"/>
</dbReference>
<evidence type="ECO:0000269" key="1">
    <source ref="1"/>
</evidence>
<evidence type="ECO:0000305" key="2"/>
<sequence>STFABAPPGBPAKGAKIFKAKCAZCHTVBAGAGHKQGPNLNGAFGRTSGTAAGFSYSAABKBKTADWBZBTLYDYLLNPKKYIPGTKMVFAGLKKPZBRADLIAFLKDATA</sequence>
<proteinExistence type="evidence at protein level"/>
<reference key="1">
    <citation type="journal article" date="1974" name="Phytochemistry">
        <title>The amino acid sequence of cytochrome c from Enteromorpha intestinalis.</title>
        <authorList>
            <person name="Meatyard B.T."/>
            <person name="Boulter D."/>
        </authorList>
    </citation>
    <scope>PROTEIN SEQUENCE</scope>
    <scope>ACETYLATION AT SER-1</scope>
    <scope>METHYLATION AT LYS-80</scope>
</reference>
<comment type="function">
    <text>Electron carrier protein. The oxidized form of the cytochrome c heme group can accept an electron from the heme group of the cytochrome c1 subunit of cytochrome reductase. Cytochrome c then transfers this electron to the cytochrome oxidase complex, the final protein carrier in the mitochondrial electron-transport chain.</text>
</comment>
<comment type="subcellular location">
    <subcellularLocation>
        <location>Mitochondrion intermembrane space</location>
    </subcellularLocation>
    <text>Loosely associated with the inner membrane.</text>
</comment>
<comment type="PTM">
    <text>Binds 1 heme c group covalently per subunit.</text>
</comment>
<comment type="similarity">
    <text evidence="2">Belongs to the cytochrome c family.</text>
</comment>
<comment type="online information" name="Protein Spotlight">
    <link uri="https://www.proteinspotlight.org/back_issues/076"/>
    <text>Life shuttle - Issue 76 of November 2006</text>
</comment>
<feature type="chain" id="PRO_0000108293" description="Cytochrome c">
    <location>
        <begin position="1"/>
        <end position="111"/>
    </location>
</feature>
<feature type="binding site" description="covalent">
    <location>
        <position position="22"/>
    </location>
    <ligand>
        <name>heme c</name>
        <dbReference type="ChEBI" id="CHEBI:61717"/>
    </ligand>
</feature>
<feature type="binding site" description="covalent">
    <location>
        <position position="25"/>
    </location>
    <ligand>
        <name>heme c</name>
        <dbReference type="ChEBI" id="CHEBI:61717"/>
    </ligand>
</feature>
<feature type="binding site" description="axial binding residue">
    <location>
        <position position="26"/>
    </location>
    <ligand>
        <name>heme c</name>
        <dbReference type="ChEBI" id="CHEBI:61717"/>
    </ligand>
    <ligandPart>
        <name>Fe</name>
        <dbReference type="ChEBI" id="CHEBI:18248"/>
    </ligandPart>
</feature>
<feature type="binding site" description="axial binding residue">
    <location>
        <position position="88"/>
    </location>
    <ligand>
        <name>heme c</name>
        <dbReference type="ChEBI" id="CHEBI:61717"/>
    </ligand>
    <ligandPart>
        <name>Fe</name>
        <dbReference type="ChEBI" id="CHEBI:18248"/>
    </ligandPart>
</feature>
<feature type="modified residue" description="N-acetylserine" evidence="1">
    <location>
        <position position="1"/>
    </location>
</feature>
<feature type="modified residue" description="N6,N6,N6-trimethyllysine" evidence="1">
    <location>
        <position position="80"/>
    </location>
</feature>
<feature type="sequence variant">
    <original>Z</original>
    <variation>B</variation>
    <location>
        <position position="69"/>
    </location>
</feature>
<keyword id="KW-0007">Acetylation</keyword>
<keyword id="KW-0903">Direct protein sequencing</keyword>
<keyword id="KW-0249">Electron transport</keyword>
<keyword id="KW-0349">Heme</keyword>
<keyword id="KW-0408">Iron</keyword>
<keyword id="KW-0479">Metal-binding</keyword>
<keyword id="KW-0488">Methylation</keyword>
<keyword id="KW-0496">Mitochondrion</keyword>
<keyword id="KW-0679">Respiratory chain</keyword>
<keyword id="KW-0813">Transport</keyword>
<organism>
    <name type="scientific">Ulva intestinalis</name>
    <name type="common">Hollow green nori</name>
    <name type="synonym">Enteromorpha intestinalis</name>
    <dbReference type="NCBI Taxonomy" id="3116"/>
    <lineage>
        <taxon>Eukaryota</taxon>
        <taxon>Viridiplantae</taxon>
        <taxon>Chlorophyta</taxon>
        <taxon>Ulvophyceae</taxon>
        <taxon>OUU clade</taxon>
        <taxon>Ulvales</taxon>
        <taxon>Ulvaceae</taxon>
        <taxon>Ulva</taxon>
    </lineage>
</organism>